<protein>
    <recommendedName>
        <fullName evidence="1">GTP 3',8-cyclase</fullName>
        <ecNumber evidence="1">4.1.99.22</ecNumber>
    </recommendedName>
    <alternativeName>
        <fullName evidence="1">Molybdenum cofactor biosynthesis protein A</fullName>
    </alternativeName>
</protein>
<proteinExistence type="inferred from homology"/>
<sequence length="325" mass="36589">MIDNYNRNINYLRISVTDRCNLRCVYCMPPEGVKQTPHSEILSLEEFARVVDAASDIGIRKIRITGGEPLVRKNIVNLFEKISTNSAIDDISLTTNGVLFAEMASDLKKAGLNRVNFSLDSLNPDTFRDITRMGKFNDVWRSIQKALELELHPVKLNVVAVRGINDHEFADFARLTKEIPIHVRFIELMPIGECNPWAVGNFIAAEEILHGLQQKFGLLDTQVKVTGSGPAKYYCLPNSKGTIGFITAISEHFCAGCNRLRLTANGQLRPCLYGKQEFDLKTPLREGASRQELAKIITKAIRHKPSQHHMEDGWRDRRVMSQIGG</sequence>
<organism>
    <name type="scientific">Desulforamulus reducens (strain ATCC BAA-1160 / DSM 100696 / MI-1)</name>
    <name type="common">Desulfotomaculum reducens</name>
    <dbReference type="NCBI Taxonomy" id="349161"/>
    <lineage>
        <taxon>Bacteria</taxon>
        <taxon>Bacillati</taxon>
        <taxon>Bacillota</taxon>
        <taxon>Clostridia</taxon>
        <taxon>Eubacteriales</taxon>
        <taxon>Peptococcaceae</taxon>
        <taxon>Desulforamulus</taxon>
    </lineage>
</organism>
<gene>
    <name evidence="1" type="primary">moaA</name>
    <name type="ordered locus">Dred_2268</name>
</gene>
<accession>A4J6S5</accession>
<name>MOAA_DESRM</name>
<dbReference type="EC" id="4.1.99.22" evidence="1"/>
<dbReference type="EMBL" id="CP000612">
    <property type="protein sequence ID" value="ABO50778.1"/>
    <property type="molecule type" value="Genomic_DNA"/>
</dbReference>
<dbReference type="RefSeq" id="WP_011878576.1">
    <property type="nucleotide sequence ID" value="NC_009253.1"/>
</dbReference>
<dbReference type="SMR" id="A4J6S5"/>
<dbReference type="STRING" id="349161.Dred_2268"/>
<dbReference type="KEGG" id="drm:Dred_2268"/>
<dbReference type="eggNOG" id="COG2896">
    <property type="taxonomic scope" value="Bacteria"/>
</dbReference>
<dbReference type="HOGENOM" id="CLU_009273_0_1_9"/>
<dbReference type="OrthoDB" id="9763993at2"/>
<dbReference type="UniPathway" id="UPA00344"/>
<dbReference type="Proteomes" id="UP000001556">
    <property type="component" value="Chromosome"/>
</dbReference>
<dbReference type="GO" id="GO:0051539">
    <property type="term" value="F:4 iron, 4 sulfur cluster binding"/>
    <property type="evidence" value="ECO:0007669"/>
    <property type="project" value="UniProtKB-UniRule"/>
</dbReference>
<dbReference type="GO" id="GO:0061799">
    <property type="term" value="F:cyclic pyranopterin monophosphate synthase activity"/>
    <property type="evidence" value="ECO:0007669"/>
    <property type="project" value="TreeGrafter"/>
</dbReference>
<dbReference type="GO" id="GO:0061798">
    <property type="term" value="F:GTP 3',8'-cyclase activity"/>
    <property type="evidence" value="ECO:0007669"/>
    <property type="project" value="UniProtKB-UniRule"/>
</dbReference>
<dbReference type="GO" id="GO:0005525">
    <property type="term" value="F:GTP binding"/>
    <property type="evidence" value="ECO:0007669"/>
    <property type="project" value="UniProtKB-UniRule"/>
</dbReference>
<dbReference type="GO" id="GO:0046872">
    <property type="term" value="F:metal ion binding"/>
    <property type="evidence" value="ECO:0007669"/>
    <property type="project" value="UniProtKB-KW"/>
</dbReference>
<dbReference type="GO" id="GO:1904047">
    <property type="term" value="F:S-adenosyl-L-methionine binding"/>
    <property type="evidence" value="ECO:0007669"/>
    <property type="project" value="UniProtKB-UniRule"/>
</dbReference>
<dbReference type="GO" id="GO:0006777">
    <property type="term" value="P:Mo-molybdopterin cofactor biosynthetic process"/>
    <property type="evidence" value="ECO:0007669"/>
    <property type="project" value="UniProtKB-UniRule"/>
</dbReference>
<dbReference type="CDD" id="cd01335">
    <property type="entry name" value="Radical_SAM"/>
    <property type="match status" value="1"/>
</dbReference>
<dbReference type="CDD" id="cd21117">
    <property type="entry name" value="Twitch_MoaA"/>
    <property type="match status" value="1"/>
</dbReference>
<dbReference type="Gene3D" id="3.20.20.70">
    <property type="entry name" value="Aldolase class I"/>
    <property type="match status" value="1"/>
</dbReference>
<dbReference type="HAMAP" id="MF_01225_B">
    <property type="entry name" value="MoaA_B"/>
    <property type="match status" value="1"/>
</dbReference>
<dbReference type="InterPro" id="IPR013785">
    <property type="entry name" value="Aldolase_TIM"/>
</dbReference>
<dbReference type="InterPro" id="IPR006638">
    <property type="entry name" value="Elp3/MiaA/NifB-like_rSAM"/>
</dbReference>
<dbReference type="InterPro" id="IPR013483">
    <property type="entry name" value="MoaA"/>
</dbReference>
<dbReference type="InterPro" id="IPR000385">
    <property type="entry name" value="MoaA_NifB_PqqE_Fe-S-bd_CS"/>
</dbReference>
<dbReference type="InterPro" id="IPR010505">
    <property type="entry name" value="MoaA_twitch"/>
</dbReference>
<dbReference type="InterPro" id="IPR050105">
    <property type="entry name" value="MoCo_biosynth_MoaA/MoaC"/>
</dbReference>
<dbReference type="InterPro" id="IPR007197">
    <property type="entry name" value="rSAM"/>
</dbReference>
<dbReference type="NCBIfam" id="TIGR02666">
    <property type="entry name" value="moaA"/>
    <property type="match status" value="1"/>
</dbReference>
<dbReference type="NCBIfam" id="NF001199">
    <property type="entry name" value="PRK00164.2-1"/>
    <property type="match status" value="1"/>
</dbReference>
<dbReference type="PANTHER" id="PTHR22960:SF0">
    <property type="entry name" value="MOLYBDENUM COFACTOR BIOSYNTHESIS PROTEIN 1"/>
    <property type="match status" value="1"/>
</dbReference>
<dbReference type="PANTHER" id="PTHR22960">
    <property type="entry name" value="MOLYBDOPTERIN COFACTOR SYNTHESIS PROTEIN A"/>
    <property type="match status" value="1"/>
</dbReference>
<dbReference type="Pfam" id="PF13353">
    <property type="entry name" value="Fer4_12"/>
    <property type="match status" value="1"/>
</dbReference>
<dbReference type="Pfam" id="PF06463">
    <property type="entry name" value="Mob_synth_C"/>
    <property type="match status" value="1"/>
</dbReference>
<dbReference type="Pfam" id="PF04055">
    <property type="entry name" value="Radical_SAM"/>
    <property type="match status" value="1"/>
</dbReference>
<dbReference type="SFLD" id="SFLDG01383">
    <property type="entry name" value="cyclic_pyranopterin_phosphate"/>
    <property type="match status" value="1"/>
</dbReference>
<dbReference type="SFLD" id="SFLDG01386">
    <property type="entry name" value="main_SPASM_domain-containing"/>
    <property type="match status" value="1"/>
</dbReference>
<dbReference type="SMART" id="SM00729">
    <property type="entry name" value="Elp3"/>
    <property type="match status" value="1"/>
</dbReference>
<dbReference type="SUPFAM" id="SSF102114">
    <property type="entry name" value="Radical SAM enzymes"/>
    <property type="match status" value="1"/>
</dbReference>
<dbReference type="PROSITE" id="PS01305">
    <property type="entry name" value="MOAA_NIFB_PQQE"/>
    <property type="match status" value="1"/>
</dbReference>
<dbReference type="PROSITE" id="PS51918">
    <property type="entry name" value="RADICAL_SAM"/>
    <property type="match status" value="1"/>
</dbReference>
<feature type="chain" id="PRO_1000073164" description="GTP 3',8-cyclase">
    <location>
        <begin position="1"/>
        <end position="325"/>
    </location>
</feature>
<feature type="domain" description="Radical SAM core" evidence="2">
    <location>
        <begin position="4"/>
        <end position="219"/>
    </location>
</feature>
<feature type="binding site" evidence="1">
    <location>
        <position position="13"/>
    </location>
    <ligand>
        <name>GTP</name>
        <dbReference type="ChEBI" id="CHEBI:37565"/>
    </ligand>
</feature>
<feature type="binding site" evidence="1">
    <location>
        <position position="20"/>
    </location>
    <ligand>
        <name>[4Fe-4S] cluster</name>
        <dbReference type="ChEBI" id="CHEBI:49883"/>
        <label>1</label>
        <note>4Fe-4S-S-AdoMet</note>
    </ligand>
</feature>
<feature type="binding site" evidence="1">
    <location>
        <position position="24"/>
    </location>
    <ligand>
        <name>[4Fe-4S] cluster</name>
        <dbReference type="ChEBI" id="CHEBI:49883"/>
        <label>1</label>
        <note>4Fe-4S-S-AdoMet</note>
    </ligand>
</feature>
<feature type="binding site" evidence="1">
    <location>
        <position position="26"/>
    </location>
    <ligand>
        <name>S-adenosyl-L-methionine</name>
        <dbReference type="ChEBI" id="CHEBI:59789"/>
    </ligand>
</feature>
<feature type="binding site" evidence="1">
    <location>
        <position position="27"/>
    </location>
    <ligand>
        <name>[4Fe-4S] cluster</name>
        <dbReference type="ChEBI" id="CHEBI:49883"/>
        <label>1</label>
        <note>4Fe-4S-S-AdoMet</note>
    </ligand>
</feature>
<feature type="binding site" evidence="1">
    <location>
        <position position="63"/>
    </location>
    <ligand>
        <name>GTP</name>
        <dbReference type="ChEBI" id="CHEBI:37565"/>
    </ligand>
</feature>
<feature type="binding site" evidence="1">
    <location>
        <position position="67"/>
    </location>
    <ligand>
        <name>S-adenosyl-L-methionine</name>
        <dbReference type="ChEBI" id="CHEBI:59789"/>
    </ligand>
</feature>
<feature type="binding site" evidence="1">
    <location>
        <position position="94"/>
    </location>
    <ligand>
        <name>GTP</name>
        <dbReference type="ChEBI" id="CHEBI:37565"/>
    </ligand>
</feature>
<feature type="binding site" evidence="1">
    <location>
        <position position="118"/>
    </location>
    <ligand>
        <name>S-adenosyl-L-methionine</name>
        <dbReference type="ChEBI" id="CHEBI:59789"/>
    </ligand>
</feature>
<feature type="binding site" evidence="1">
    <location>
        <position position="155"/>
    </location>
    <ligand>
        <name>GTP</name>
        <dbReference type="ChEBI" id="CHEBI:37565"/>
    </ligand>
</feature>
<feature type="binding site" evidence="1">
    <location>
        <position position="189"/>
    </location>
    <ligand>
        <name>S-adenosyl-L-methionine</name>
        <dbReference type="ChEBI" id="CHEBI:59789"/>
    </ligand>
</feature>
<feature type="binding site" evidence="1">
    <location>
        <position position="254"/>
    </location>
    <ligand>
        <name>[4Fe-4S] cluster</name>
        <dbReference type="ChEBI" id="CHEBI:49883"/>
        <label>2</label>
        <note>4Fe-4S-substrate</note>
    </ligand>
</feature>
<feature type="binding site" evidence="1">
    <location>
        <position position="257"/>
    </location>
    <ligand>
        <name>[4Fe-4S] cluster</name>
        <dbReference type="ChEBI" id="CHEBI:49883"/>
        <label>2</label>
        <note>4Fe-4S-substrate</note>
    </ligand>
</feature>
<feature type="binding site" evidence="1">
    <location>
        <begin position="259"/>
        <end position="261"/>
    </location>
    <ligand>
        <name>GTP</name>
        <dbReference type="ChEBI" id="CHEBI:37565"/>
    </ligand>
</feature>
<feature type="binding site" evidence="1">
    <location>
        <position position="271"/>
    </location>
    <ligand>
        <name>[4Fe-4S] cluster</name>
        <dbReference type="ChEBI" id="CHEBI:49883"/>
        <label>2</label>
        <note>4Fe-4S-substrate</note>
    </ligand>
</feature>
<keyword id="KW-0004">4Fe-4S</keyword>
<keyword id="KW-0342">GTP-binding</keyword>
<keyword id="KW-0408">Iron</keyword>
<keyword id="KW-0411">Iron-sulfur</keyword>
<keyword id="KW-0456">Lyase</keyword>
<keyword id="KW-0479">Metal-binding</keyword>
<keyword id="KW-0501">Molybdenum cofactor biosynthesis</keyword>
<keyword id="KW-0547">Nucleotide-binding</keyword>
<keyword id="KW-1185">Reference proteome</keyword>
<keyword id="KW-0949">S-adenosyl-L-methionine</keyword>
<comment type="function">
    <text evidence="1">Catalyzes the cyclization of GTP to (8S)-3',8-cyclo-7,8-dihydroguanosine 5'-triphosphate.</text>
</comment>
<comment type="catalytic activity">
    <reaction evidence="1">
        <text>GTP + AH2 + S-adenosyl-L-methionine = (8S)-3',8-cyclo-7,8-dihydroguanosine 5'-triphosphate + 5'-deoxyadenosine + L-methionine + A + H(+)</text>
        <dbReference type="Rhea" id="RHEA:49576"/>
        <dbReference type="ChEBI" id="CHEBI:13193"/>
        <dbReference type="ChEBI" id="CHEBI:15378"/>
        <dbReference type="ChEBI" id="CHEBI:17319"/>
        <dbReference type="ChEBI" id="CHEBI:17499"/>
        <dbReference type="ChEBI" id="CHEBI:37565"/>
        <dbReference type="ChEBI" id="CHEBI:57844"/>
        <dbReference type="ChEBI" id="CHEBI:59789"/>
        <dbReference type="ChEBI" id="CHEBI:131766"/>
        <dbReference type="EC" id="4.1.99.22"/>
    </reaction>
</comment>
<comment type="cofactor">
    <cofactor evidence="1">
        <name>[4Fe-4S] cluster</name>
        <dbReference type="ChEBI" id="CHEBI:49883"/>
    </cofactor>
    <text evidence="1">Binds 2 [4Fe-4S] clusters. Binds 1 [4Fe-4S] cluster coordinated with 3 cysteines and an exchangeable S-adenosyl-L-methionine and 1 [4Fe-4S] cluster coordinated with 3 cysteines and the GTP-derived substrate.</text>
</comment>
<comment type="pathway">
    <text evidence="1">Cofactor biosynthesis; molybdopterin biosynthesis.</text>
</comment>
<comment type="subunit">
    <text evidence="1">Monomer and homodimer.</text>
</comment>
<comment type="similarity">
    <text evidence="1">Belongs to the radical SAM superfamily. MoaA family.</text>
</comment>
<reference key="1">
    <citation type="submission" date="2007-03" db="EMBL/GenBank/DDBJ databases">
        <title>Complete sequence of Desulfotomaculum reducens MI-1.</title>
        <authorList>
            <consortium name="US DOE Joint Genome Institute"/>
            <person name="Copeland A."/>
            <person name="Lucas S."/>
            <person name="Lapidus A."/>
            <person name="Barry K."/>
            <person name="Detter J.C."/>
            <person name="Glavina del Rio T."/>
            <person name="Hammon N."/>
            <person name="Israni S."/>
            <person name="Dalin E."/>
            <person name="Tice H."/>
            <person name="Pitluck S."/>
            <person name="Sims D."/>
            <person name="Brettin T."/>
            <person name="Bruce D."/>
            <person name="Han C."/>
            <person name="Tapia R."/>
            <person name="Schmutz J."/>
            <person name="Larimer F."/>
            <person name="Land M."/>
            <person name="Hauser L."/>
            <person name="Kyrpides N."/>
            <person name="Kim E."/>
            <person name="Tebo B.M."/>
            <person name="Richardson P."/>
        </authorList>
    </citation>
    <scope>NUCLEOTIDE SEQUENCE [LARGE SCALE GENOMIC DNA]</scope>
    <source>
        <strain>ATCC BAA-1160 / DSM 100696 / MI-1</strain>
    </source>
</reference>
<evidence type="ECO:0000255" key="1">
    <source>
        <dbReference type="HAMAP-Rule" id="MF_01225"/>
    </source>
</evidence>
<evidence type="ECO:0000255" key="2">
    <source>
        <dbReference type="PROSITE-ProRule" id="PRU01266"/>
    </source>
</evidence>